<protein>
    <recommendedName>
        <fullName evidence="1">Small ribosomal subunit protein uS11</fullName>
    </recommendedName>
    <alternativeName>
        <fullName evidence="2">30S ribosomal protein S11</fullName>
    </alternativeName>
</protein>
<comment type="function">
    <text evidence="1">Located on the platform of the 30S subunit, it bridges several disparate RNA helices of the 16S rRNA. Forms part of the Shine-Dalgarno cleft in the 70S ribosome.</text>
</comment>
<comment type="subunit">
    <text evidence="1">Part of the 30S ribosomal subunit. Interacts with proteins S7 and S18. Binds to IF-3.</text>
</comment>
<comment type="similarity">
    <text evidence="1">Belongs to the universal ribosomal protein uS11 family.</text>
</comment>
<sequence>MAKEATRVRRRERKNISSGVAHVNSTFNNTMITITDAQGNAIAWSSAGAQGFKGSRKSTPFAAQIAAEDCAKKAQEHGMRSLEVEVCGPGSGRESALRALQAAGFVITSIRDVTPIPHNGCRPRKKRRV</sequence>
<proteinExistence type="inferred from homology"/>
<feature type="chain" id="PRO_1000051823" description="Small ribosomal subunit protein uS11">
    <location>
        <begin position="1"/>
        <end position="129"/>
    </location>
</feature>
<evidence type="ECO:0000255" key="1">
    <source>
        <dbReference type="HAMAP-Rule" id="MF_01310"/>
    </source>
</evidence>
<evidence type="ECO:0000305" key="2"/>
<name>RS11_BRUO2</name>
<gene>
    <name evidence="1" type="primary">rpsK</name>
    <name type="ordered locus">BOV_1173</name>
</gene>
<accession>A5VQY3</accession>
<keyword id="KW-0687">Ribonucleoprotein</keyword>
<keyword id="KW-0689">Ribosomal protein</keyword>
<keyword id="KW-0694">RNA-binding</keyword>
<keyword id="KW-0699">rRNA-binding</keyword>
<reference key="1">
    <citation type="journal article" date="2009" name="PLoS ONE">
        <title>Genome degradation in Brucella ovis corresponds with narrowing of its host range and tissue tropism.</title>
        <authorList>
            <person name="Tsolis R.M."/>
            <person name="Seshadri R."/>
            <person name="Santos R.L."/>
            <person name="Sangari F.J."/>
            <person name="Lobo J.M."/>
            <person name="de Jong M.F."/>
            <person name="Ren Q."/>
            <person name="Myers G."/>
            <person name="Brinkac L.M."/>
            <person name="Nelson W.C."/>
            <person name="Deboy R.T."/>
            <person name="Angiuoli S."/>
            <person name="Khouri H."/>
            <person name="Dimitrov G."/>
            <person name="Robinson J.R."/>
            <person name="Mulligan S."/>
            <person name="Walker R.L."/>
            <person name="Elzer P.E."/>
            <person name="Hassan K.A."/>
            <person name="Paulsen I.T."/>
        </authorList>
    </citation>
    <scope>NUCLEOTIDE SEQUENCE [LARGE SCALE GENOMIC DNA]</scope>
    <source>
        <strain>ATCC 25840 / 63/290 / NCTC 10512</strain>
    </source>
</reference>
<dbReference type="EMBL" id="CP000708">
    <property type="protein sequence ID" value="ABQ61456.1"/>
    <property type="molecule type" value="Genomic_DNA"/>
</dbReference>
<dbReference type="RefSeq" id="WP_002964339.1">
    <property type="nucleotide sequence ID" value="NC_009505.1"/>
</dbReference>
<dbReference type="SMR" id="A5VQY3"/>
<dbReference type="GeneID" id="97533547"/>
<dbReference type="KEGG" id="bov:BOV_1173"/>
<dbReference type="HOGENOM" id="CLU_072439_5_0_5"/>
<dbReference type="PhylomeDB" id="A5VQY3"/>
<dbReference type="Proteomes" id="UP000006383">
    <property type="component" value="Chromosome I"/>
</dbReference>
<dbReference type="GO" id="GO:1990904">
    <property type="term" value="C:ribonucleoprotein complex"/>
    <property type="evidence" value="ECO:0007669"/>
    <property type="project" value="UniProtKB-KW"/>
</dbReference>
<dbReference type="GO" id="GO:0005840">
    <property type="term" value="C:ribosome"/>
    <property type="evidence" value="ECO:0007669"/>
    <property type="project" value="UniProtKB-KW"/>
</dbReference>
<dbReference type="GO" id="GO:0019843">
    <property type="term" value="F:rRNA binding"/>
    <property type="evidence" value="ECO:0007669"/>
    <property type="project" value="UniProtKB-UniRule"/>
</dbReference>
<dbReference type="GO" id="GO:0003735">
    <property type="term" value="F:structural constituent of ribosome"/>
    <property type="evidence" value="ECO:0007669"/>
    <property type="project" value="InterPro"/>
</dbReference>
<dbReference type="GO" id="GO:0006412">
    <property type="term" value="P:translation"/>
    <property type="evidence" value="ECO:0007669"/>
    <property type="project" value="UniProtKB-UniRule"/>
</dbReference>
<dbReference type="FunFam" id="3.30.420.80:FF:000001">
    <property type="entry name" value="30S ribosomal protein S11"/>
    <property type="match status" value="1"/>
</dbReference>
<dbReference type="Gene3D" id="3.30.420.80">
    <property type="entry name" value="Ribosomal protein S11"/>
    <property type="match status" value="1"/>
</dbReference>
<dbReference type="HAMAP" id="MF_01310">
    <property type="entry name" value="Ribosomal_uS11"/>
    <property type="match status" value="1"/>
</dbReference>
<dbReference type="InterPro" id="IPR001971">
    <property type="entry name" value="Ribosomal_uS11"/>
</dbReference>
<dbReference type="InterPro" id="IPR019981">
    <property type="entry name" value="Ribosomal_uS11_bac-type"/>
</dbReference>
<dbReference type="InterPro" id="IPR018102">
    <property type="entry name" value="Ribosomal_uS11_CS"/>
</dbReference>
<dbReference type="InterPro" id="IPR036967">
    <property type="entry name" value="Ribosomal_uS11_sf"/>
</dbReference>
<dbReference type="NCBIfam" id="NF003698">
    <property type="entry name" value="PRK05309.1"/>
    <property type="match status" value="1"/>
</dbReference>
<dbReference type="NCBIfam" id="TIGR03632">
    <property type="entry name" value="uS11_bact"/>
    <property type="match status" value="1"/>
</dbReference>
<dbReference type="PANTHER" id="PTHR11759">
    <property type="entry name" value="40S RIBOSOMAL PROTEIN S14/30S RIBOSOMAL PROTEIN S11"/>
    <property type="match status" value="1"/>
</dbReference>
<dbReference type="Pfam" id="PF00411">
    <property type="entry name" value="Ribosomal_S11"/>
    <property type="match status" value="1"/>
</dbReference>
<dbReference type="PIRSF" id="PIRSF002131">
    <property type="entry name" value="Ribosomal_S11"/>
    <property type="match status" value="1"/>
</dbReference>
<dbReference type="SUPFAM" id="SSF53137">
    <property type="entry name" value="Translational machinery components"/>
    <property type="match status" value="1"/>
</dbReference>
<dbReference type="PROSITE" id="PS00054">
    <property type="entry name" value="RIBOSOMAL_S11"/>
    <property type="match status" value="1"/>
</dbReference>
<organism>
    <name type="scientific">Brucella ovis (strain ATCC 25840 / 63/290 / NCTC 10512)</name>
    <dbReference type="NCBI Taxonomy" id="444178"/>
    <lineage>
        <taxon>Bacteria</taxon>
        <taxon>Pseudomonadati</taxon>
        <taxon>Pseudomonadota</taxon>
        <taxon>Alphaproteobacteria</taxon>
        <taxon>Hyphomicrobiales</taxon>
        <taxon>Brucellaceae</taxon>
        <taxon>Brucella/Ochrobactrum group</taxon>
        <taxon>Brucella</taxon>
    </lineage>
</organism>